<dbReference type="EC" id="1.1.1.86" evidence="1"/>
<dbReference type="EMBL" id="CP001157">
    <property type="protein sequence ID" value="ACO80373.1"/>
    <property type="molecule type" value="Genomic_DNA"/>
</dbReference>
<dbReference type="RefSeq" id="WP_012702741.1">
    <property type="nucleotide sequence ID" value="NC_012560.1"/>
</dbReference>
<dbReference type="PDB" id="4XIY">
    <property type="method" value="X-ray"/>
    <property type="resolution" value="2.50 A"/>
    <property type="chains" value="A/B/C/D=1-338"/>
</dbReference>
<dbReference type="PDBsum" id="4XIY"/>
<dbReference type="SMR" id="C1DFH7"/>
<dbReference type="STRING" id="322710.Avin_42500"/>
<dbReference type="EnsemblBacteria" id="ACO80373">
    <property type="protein sequence ID" value="ACO80373"/>
    <property type="gene ID" value="Avin_42500"/>
</dbReference>
<dbReference type="GeneID" id="88187165"/>
<dbReference type="KEGG" id="avn:Avin_42500"/>
<dbReference type="eggNOG" id="COG0059">
    <property type="taxonomic scope" value="Bacteria"/>
</dbReference>
<dbReference type="HOGENOM" id="CLU_033821_0_1_6"/>
<dbReference type="OrthoDB" id="9804088at2"/>
<dbReference type="BRENDA" id="1.1.1.383">
    <property type="organism ID" value="49"/>
</dbReference>
<dbReference type="BRENDA" id="1.1.1.86">
    <property type="organism ID" value="49"/>
</dbReference>
<dbReference type="UniPathway" id="UPA00047">
    <property type="reaction ID" value="UER00056"/>
</dbReference>
<dbReference type="UniPathway" id="UPA00049">
    <property type="reaction ID" value="UER00060"/>
</dbReference>
<dbReference type="EvolutionaryTrace" id="C1DFH7"/>
<dbReference type="Proteomes" id="UP000002424">
    <property type="component" value="Chromosome"/>
</dbReference>
<dbReference type="GO" id="GO:0005829">
    <property type="term" value="C:cytosol"/>
    <property type="evidence" value="ECO:0007669"/>
    <property type="project" value="TreeGrafter"/>
</dbReference>
<dbReference type="GO" id="GO:0004455">
    <property type="term" value="F:ketol-acid reductoisomerase activity"/>
    <property type="evidence" value="ECO:0007669"/>
    <property type="project" value="UniProtKB-UniRule"/>
</dbReference>
<dbReference type="GO" id="GO:0000287">
    <property type="term" value="F:magnesium ion binding"/>
    <property type="evidence" value="ECO:0007669"/>
    <property type="project" value="UniProtKB-UniRule"/>
</dbReference>
<dbReference type="GO" id="GO:0050661">
    <property type="term" value="F:NADP binding"/>
    <property type="evidence" value="ECO:0007669"/>
    <property type="project" value="InterPro"/>
</dbReference>
<dbReference type="GO" id="GO:0009097">
    <property type="term" value="P:isoleucine biosynthetic process"/>
    <property type="evidence" value="ECO:0007669"/>
    <property type="project" value="UniProtKB-UniRule"/>
</dbReference>
<dbReference type="GO" id="GO:0009099">
    <property type="term" value="P:L-valine biosynthetic process"/>
    <property type="evidence" value="ECO:0007669"/>
    <property type="project" value="UniProtKB-UniRule"/>
</dbReference>
<dbReference type="FunFam" id="3.40.50.720:FF:000023">
    <property type="entry name" value="Ketol-acid reductoisomerase (NADP(+))"/>
    <property type="match status" value="1"/>
</dbReference>
<dbReference type="Gene3D" id="6.10.240.10">
    <property type="match status" value="1"/>
</dbReference>
<dbReference type="Gene3D" id="3.40.50.720">
    <property type="entry name" value="NAD(P)-binding Rossmann-like Domain"/>
    <property type="match status" value="1"/>
</dbReference>
<dbReference type="HAMAP" id="MF_00435">
    <property type="entry name" value="IlvC"/>
    <property type="match status" value="1"/>
</dbReference>
<dbReference type="InterPro" id="IPR008927">
    <property type="entry name" value="6-PGluconate_DH-like_C_sf"/>
</dbReference>
<dbReference type="InterPro" id="IPR013023">
    <property type="entry name" value="KARI"/>
</dbReference>
<dbReference type="InterPro" id="IPR000506">
    <property type="entry name" value="KARI_C"/>
</dbReference>
<dbReference type="InterPro" id="IPR013116">
    <property type="entry name" value="KARI_N"/>
</dbReference>
<dbReference type="InterPro" id="IPR014359">
    <property type="entry name" value="KARI_prok"/>
</dbReference>
<dbReference type="InterPro" id="IPR036291">
    <property type="entry name" value="NAD(P)-bd_dom_sf"/>
</dbReference>
<dbReference type="NCBIfam" id="TIGR00465">
    <property type="entry name" value="ilvC"/>
    <property type="match status" value="1"/>
</dbReference>
<dbReference type="NCBIfam" id="NF004017">
    <property type="entry name" value="PRK05479.1"/>
    <property type="match status" value="1"/>
</dbReference>
<dbReference type="NCBIfam" id="NF009940">
    <property type="entry name" value="PRK13403.1"/>
    <property type="match status" value="1"/>
</dbReference>
<dbReference type="PANTHER" id="PTHR21371">
    <property type="entry name" value="KETOL-ACID REDUCTOISOMERASE, MITOCHONDRIAL"/>
    <property type="match status" value="1"/>
</dbReference>
<dbReference type="PANTHER" id="PTHR21371:SF1">
    <property type="entry name" value="KETOL-ACID REDUCTOISOMERASE, MITOCHONDRIAL"/>
    <property type="match status" value="1"/>
</dbReference>
<dbReference type="Pfam" id="PF01450">
    <property type="entry name" value="KARI_C"/>
    <property type="match status" value="1"/>
</dbReference>
<dbReference type="Pfam" id="PF07991">
    <property type="entry name" value="KARI_N"/>
    <property type="match status" value="1"/>
</dbReference>
<dbReference type="PIRSF" id="PIRSF000116">
    <property type="entry name" value="IlvC_gammaproteo"/>
    <property type="match status" value="1"/>
</dbReference>
<dbReference type="SUPFAM" id="SSF48179">
    <property type="entry name" value="6-phosphogluconate dehydrogenase C-terminal domain-like"/>
    <property type="match status" value="1"/>
</dbReference>
<dbReference type="SUPFAM" id="SSF51735">
    <property type="entry name" value="NAD(P)-binding Rossmann-fold domains"/>
    <property type="match status" value="1"/>
</dbReference>
<dbReference type="PROSITE" id="PS51851">
    <property type="entry name" value="KARI_C"/>
    <property type="match status" value="1"/>
</dbReference>
<dbReference type="PROSITE" id="PS51850">
    <property type="entry name" value="KARI_N"/>
    <property type="match status" value="1"/>
</dbReference>
<name>ILVC_AZOVD</name>
<gene>
    <name evidence="1" type="primary">ilvC</name>
    <name type="ordered locus">Avin_42500</name>
</gene>
<accession>C1DFH7</accession>
<evidence type="ECO:0000255" key="1">
    <source>
        <dbReference type="HAMAP-Rule" id="MF_00435"/>
    </source>
</evidence>
<evidence type="ECO:0000255" key="2">
    <source>
        <dbReference type="PROSITE-ProRule" id="PRU01197"/>
    </source>
</evidence>
<evidence type="ECO:0000255" key="3">
    <source>
        <dbReference type="PROSITE-ProRule" id="PRU01198"/>
    </source>
</evidence>
<evidence type="ECO:0000269" key="4">
    <source>
    </source>
</evidence>
<evidence type="ECO:0000303" key="5">
    <source>
    </source>
</evidence>
<evidence type="ECO:0000305" key="6">
    <source>
    </source>
</evidence>
<evidence type="ECO:0007829" key="7">
    <source>
        <dbReference type="PDB" id="4XIY"/>
    </source>
</evidence>
<protein>
    <recommendedName>
        <fullName evidence="1 5">Ketol-acid reductoisomerase (NADP(+))</fullName>
        <shortName evidence="1 5">KARI</shortName>
        <ecNumber evidence="1">1.1.1.86</ecNumber>
    </recommendedName>
    <alternativeName>
        <fullName evidence="1">Acetohydroxy-acid isomeroreductase</fullName>
        <shortName evidence="1">AHIR</shortName>
    </alternativeName>
    <alternativeName>
        <fullName evidence="1">Alpha-keto-beta-hydroxylacyl reductoisomerase</fullName>
    </alternativeName>
    <alternativeName>
        <fullName evidence="1 5">Ketol-acid reductoisomerase type 1</fullName>
    </alternativeName>
    <alternativeName>
        <fullName evidence="1 5">Ketol-acid reductoisomerase type I</fullName>
    </alternativeName>
</protein>
<reference key="1">
    <citation type="journal article" date="2009" name="J. Bacteriol.">
        <title>Genome sequence of Azotobacter vinelandii, an obligate aerobe specialized to support diverse anaerobic metabolic processes.</title>
        <authorList>
            <person name="Setubal J.C."/>
            <person name="Dos Santos P."/>
            <person name="Goldman B.S."/>
            <person name="Ertesvaag H."/>
            <person name="Espin G."/>
            <person name="Rubio L.M."/>
            <person name="Valla S."/>
            <person name="Almeida N.F."/>
            <person name="Balasubramanian D."/>
            <person name="Cromes L."/>
            <person name="Curatti L."/>
            <person name="Du Z."/>
            <person name="Godsy E."/>
            <person name="Goodner B."/>
            <person name="Hellner-Burris K."/>
            <person name="Hernandez J.A."/>
            <person name="Houmiel K."/>
            <person name="Imperial J."/>
            <person name="Kennedy C."/>
            <person name="Larson T.J."/>
            <person name="Latreille P."/>
            <person name="Ligon L.S."/>
            <person name="Lu J."/>
            <person name="Maerk M."/>
            <person name="Miller N.M."/>
            <person name="Norton S."/>
            <person name="O'Carroll I.P."/>
            <person name="Paulsen I."/>
            <person name="Raulfs E.C."/>
            <person name="Roemer R."/>
            <person name="Rosser J."/>
            <person name="Segura D."/>
            <person name="Slater S."/>
            <person name="Stricklin S.L."/>
            <person name="Studholme D.J."/>
            <person name="Sun J."/>
            <person name="Viana C.J."/>
            <person name="Wallin E."/>
            <person name="Wang B."/>
            <person name="Wheeler C."/>
            <person name="Zhu H."/>
            <person name="Dean D.R."/>
            <person name="Dixon R."/>
            <person name="Wood D."/>
        </authorList>
    </citation>
    <scope>NUCLEOTIDE SEQUENCE [LARGE SCALE GENOMIC DNA]</scope>
    <source>
        <strain>DJ / ATCC BAA-1303</strain>
    </source>
</reference>
<reference key="2">
    <citation type="journal article" date="2015" name="Biochem. J.">
        <title>Cofactor specificity motifs and the induced fit mechanism in class I ketol-acid reductoisomerases.</title>
        <authorList>
            <person name="Cahn J.K."/>
            <person name="Brinkmann-Chen S."/>
            <person name="Spatzal T."/>
            <person name="Wiig J.A."/>
            <person name="Buller A.R."/>
            <person name="Einsle O."/>
            <person name="Hu Y."/>
            <person name="Ribbe M.W."/>
            <person name="Arnold F.H."/>
        </authorList>
    </citation>
    <scope>X-RAY CRYSTALLOGRAPHY (2.50 ANGSTROMS) IN COMPLEX WITH MAGNESIUM IONS</scope>
    <scope>FUNCTION</scope>
    <scope>COFACTOR</scope>
</reference>
<feature type="chain" id="PRO_1000206075" description="Ketol-acid reductoisomerase (NADP(+))">
    <location>
        <begin position="1"/>
        <end position="338"/>
    </location>
</feature>
<feature type="domain" description="KARI N-terminal Rossmann" evidence="2">
    <location>
        <begin position="1"/>
        <end position="181"/>
    </location>
</feature>
<feature type="domain" description="KARI C-terminal knotted" evidence="3">
    <location>
        <begin position="182"/>
        <end position="327"/>
    </location>
</feature>
<feature type="active site" evidence="1">
    <location>
        <position position="107"/>
    </location>
</feature>
<feature type="binding site" evidence="1">
    <location>
        <begin position="24"/>
        <end position="27"/>
    </location>
    <ligand>
        <name>NADP(+)</name>
        <dbReference type="ChEBI" id="CHEBI:58349"/>
    </ligand>
</feature>
<feature type="binding site" evidence="1">
    <location>
        <position position="47"/>
    </location>
    <ligand>
        <name>NADP(+)</name>
        <dbReference type="ChEBI" id="CHEBI:58349"/>
    </ligand>
</feature>
<feature type="binding site" evidence="1">
    <location>
        <position position="50"/>
    </location>
    <ligand>
        <name>NADP(+)</name>
        <dbReference type="ChEBI" id="CHEBI:58349"/>
    </ligand>
</feature>
<feature type="binding site" evidence="1">
    <location>
        <position position="52"/>
    </location>
    <ligand>
        <name>NADP(+)</name>
        <dbReference type="ChEBI" id="CHEBI:58349"/>
    </ligand>
</feature>
<feature type="binding site" evidence="1">
    <location>
        <begin position="82"/>
        <end position="85"/>
    </location>
    <ligand>
        <name>NADP(+)</name>
        <dbReference type="ChEBI" id="CHEBI:58349"/>
    </ligand>
</feature>
<feature type="binding site" evidence="1">
    <location>
        <position position="133"/>
    </location>
    <ligand>
        <name>NADP(+)</name>
        <dbReference type="ChEBI" id="CHEBI:58349"/>
    </ligand>
</feature>
<feature type="binding site" evidence="1 6">
    <location>
        <position position="190"/>
    </location>
    <ligand>
        <name>Mg(2+)</name>
        <dbReference type="ChEBI" id="CHEBI:18420"/>
        <label>1</label>
    </ligand>
</feature>
<feature type="binding site" evidence="1 4">
    <location>
        <position position="190"/>
    </location>
    <ligand>
        <name>Mg(2+)</name>
        <dbReference type="ChEBI" id="CHEBI:18420"/>
        <label>2</label>
    </ligand>
</feature>
<feature type="binding site" evidence="1 6">
    <location>
        <position position="194"/>
    </location>
    <ligand>
        <name>Mg(2+)</name>
        <dbReference type="ChEBI" id="CHEBI:18420"/>
        <label>1</label>
    </ligand>
</feature>
<feature type="binding site" evidence="1 4">
    <location>
        <position position="226"/>
    </location>
    <ligand>
        <name>Mg(2+)</name>
        <dbReference type="ChEBI" id="CHEBI:18420"/>
        <label>2</label>
    </ligand>
</feature>
<feature type="binding site" evidence="1 4">
    <location>
        <position position="230"/>
    </location>
    <ligand>
        <name>Mg(2+)</name>
        <dbReference type="ChEBI" id="CHEBI:18420"/>
        <label>2</label>
    </ligand>
</feature>
<feature type="binding site" evidence="1">
    <location>
        <position position="251"/>
    </location>
    <ligand>
        <name>substrate</name>
    </ligand>
</feature>
<feature type="helix" evidence="7">
    <location>
        <begin position="6"/>
        <end position="8"/>
    </location>
</feature>
<feature type="helix" evidence="7">
    <location>
        <begin position="12"/>
        <end position="15"/>
    </location>
</feature>
<feature type="strand" evidence="7">
    <location>
        <begin position="19"/>
        <end position="22"/>
    </location>
</feature>
<feature type="helix" evidence="7">
    <location>
        <begin position="26"/>
        <end position="37"/>
    </location>
</feature>
<feature type="strand" evidence="7">
    <location>
        <begin position="42"/>
        <end position="45"/>
    </location>
</feature>
<feature type="helix" evidence="7">
    <location>
        <begin position="52"/>
        <end position="58"/>
    </location>
</feature>
<feature type="strand" evidence="7">
    <location>
        <begin position="62"/>
        <end position="64"/>
    </location>
</feature>
<feature type="helix" evidence="7">
    <location>
        <begin position="66"/>
        <end position="71"/>
    </location>
</feature>
<feature type="strand" evidence="7">
    <location>
        <begin position="74"/>
        <end position="78"/>
    </location>
</feature>
<feature type="helix" evidence="7">
    <location>
        <begin position="82"/>
        <end position="84"/>
    </location>
</feature>
<feature type="helix" evidence="7">
    <location>
        <begin position="85"/>
        <end position="91"/>
    </location>
</feature>
<feature type="helix" evidence="7">
    <location>
        <begin position="94"/>
        <end position="96"/>
    </location>
</feature>
<feature type="strand" evidence="7">
    <location>
        <begin position="102"/>
        <end position="107"/>
    </location>
</feature>
<feature type="helix" evidence="7">
    <location>
        <begin position="109"/>
        <end position="112"/>
    </location>
</feature>
<feature type="strand" evidence="7">
    <location>
        <begin position="123"/>
        <end position="131"/>
    </location>
</feature>
<feature type="helix" evidence="7">
    <location>
        <begin position="133"/>
        <end position="141"/>
    </location>
</feature>
<feature type="strand" evidence="7">
    <location>
        <begin position="148"/>
        <end position="158"/>
    </location>
</feature>
<feature type="helix" evidence="7">
    <location>
        <begin position="160"/>
        <end position="170"/>
    </location>
</feature>
<feature type="helix" evidence="7">
    <location>
        <begin position="173"/>
        <end position="175"/>
    </location>
</feature>
<feature type="strand" evidence="7">
    <location>
        <begin position="178"/>
        <end position="180"/>
    </location>
</feature>
<feature type="helix" evidence="7">
    <location>
        <begin position="183"/>
        <end position="196"/>
    </location>
</feature>
<feature type="turn" evidence="7">
    <location>
        <begin position="197"/>
        <end position="199"/>
    </location>
</feature>
<feature type="helix" evidence="7">
    <location>
        <begin position="200"/>
        <end position="215"/>
    </location>
</feature>
<feature type="helix" evidence="7">
    <location>
        <begin position="220"/>
        <end position="227"/>
    </location>
</feature>
<feature type="turn" evidence="7">
    <location>
        <begin position="228"/>
        <end position="230"/>
    </location>
</feature>
<feature type="helix" evidence="7">
    <location>
        <begin position="231"/>
        <end position="249"/>
    </location>
</feature>
<feature type="helix" evidence="7">
    <location>
        <begin position="252"/>
        <end position="265"/>
    </location>
</feature>
<feature type="helix" evidence="7">
    <location>
        <begin position="268"/>
        <end position="282"/>
    </location>
</feature>
<feature type="helix" evidence="7">
    <location>
        <begin position="285"/>
        <end position="295"/>
    </location>
</feature>
<feature type="helix" evidence="7">
    <location>
        <begin position="299"/>
        <end position="309"/>
    </location>
</feature>
<feature type="helix" evidence="7">
    <location>
        <begin position="312"/>
        <end position="322"/>
    </location>
</feature>
<comment type="function">
    <text evidence="1 6">Involved in the biosynthesis of branched-chain amino acids (BCAA). Catalyzes an alkyl-migration followed by a ketol-acid reduction of (S)-2-acetolactate (S2AL) to yield (R)-2,3-dihydroxy-isovalerate. In the isomerase reaction, S2AL is rearranged via a Mg-dependent methyl migration to produce 3-hydroxy-3-methyl-2-ketobutyrate (HMKB). In the reductase reaction, this 2-ketoacid undergoes a metal-dependent reduction by NADPH to yield (R)-2,3-dihydroxy-isovalerate.</text>
</comment>
<comment type="catalytic activity">
    <reaction evidence="1">
        <text>(2R)-2,3-dihydroxy-3-methylbutanoate + NADP(+) = (2S)-2-acetolactate + NADPH + H(+)</text>
        <dbReference type="Rhea" id="RHEA:22068"/>
        <dbReference type="ChEBI" id="CHEBI:15378"/>
        <dbReference type="ChEBI" id="CHEBI:49072"/>
        <dbReference type="ChEBI" id="CHEBI:57783"/>
        <dbReference type="ChEBI" id="CHEBI:58349"/>
        <dbReference type="ChEBI" id="CHEBI:58476"/>
        <dbReference type="EC" id="1.1.1.86"/>
    </reaction>
</comment>
<comment type="catalytic activity">
    <reaction evidence="1">
        <text>(2R,3R)-2,3-dihydroxy-3-methylpentanoate + NADP(+) = (S)-2-ethyl-2-hydroxy-3-oxobutanoate + NADPH + H(+)</text>
        <dbReference type="Rhea" id="RHEA:13493"/>
        <dbReference type="ChEBI" id="CHEBI:15378"/>
        <dbReference type="ChEBI" id="CHEBI:49256"/>
        <dbReference type="ChEBI" id="CHEBI:49258"/>
        <dbReference type="ChEBI" id="CHEBI:57783"/>
        <dbReference type="ChEBI" id="CHEBI:58349"/>
        <dbReference type="EC" id="1.1.1.86"/>
    </reaction>
</comment>
<comment type="cofactor">
    <cofactor evidence="1 4">
        <name>Mg(2+)</name>
        <dbReference type="ChEBI" id="CHEBI:18420"/>
    </cofactor>
    <text evidence="1 4">Binds 2 magnesium ions per subunit.</text>
</comment>
<comment type="pathway">
    <text evidence="1">Amino-acid biosynthesis; L-isoleucine biosynthesis; L-isoleucine from 2-oxobutanoate: step 2/4.</text>
</comment>
<comment type="pathway">
    <text evidence="1">Amino-acid biosynthesis; L-valine biosynthesis; L-valine from pyruvate: step 2/4.</text>
</comment>
<comment type="similarity">
    <text evidence="1">Belongs to the ketol-acid reductoisomerase family.</text>
</comment>
<keyword id="KW-0002">3D-structure</keyword>
<keyword id="KW-0028">Amino-acid biosynthesis</keyword>
<keyword id="KW-0100">Branched-chain amino acid biosynthesis</keyword>
<keyword id="KW-0460">Magnesium</keyword>
<keyword id="KW-0479">Metal-binding</keyword>
<keyword id="KW-0521">NADP</keyword>
<keyword id="KW-0560">Oxidoreductase</keyword>
<proteinExistence type="evidence at protein level"/>
<organism>
    <name type="scientific">Azotobacter vinelandii (strain DJ / ATCC BAA-1303)</name>
    <dbReference type="NCBI Taxonomy" id="322710"/>
    <lineage>
        <taxon>Bacteria</taxon>
        <taxon>Pseudomonadati</taxon>
        <taxon>Pseudomonadota</taxon>
        <taxon>Gammaproteobacteria</taxon>
        <taxon>Pseudomonadales</taxon>
        <taxon>Pseudomonadaceae</taxon>
        <taxon>Azotobacter</taxon>
    </lineage>
</organism>
<sequence length="338" mass="36635">MKVYYDKDCDLSIIQSKKVAIIGYGSQGHAHACNLKDSGVDVYVGLRAGSASVAKAEAHGLTVKSVKDAVAAADVVMILTPDEFQGRLYKDEIEPNLKKGATLAFAHGFSIHYNQVVPRADLDVIMIAPKAPGHTVRSEFVRGGGIPDLIAVYQDASGNAKNLALSYACGVGGGRTGIIETTFKDETETDLFGEQAVLCGGCVELVKAGFETLVEAGYAPEMAYFECLHELKLIVDLMFEGGIANMNYSISNNAEYGEYVTGPEVINEQSRQAMRNALKRIQDGEYAKMFITEGAANYPSMTAYRRNNAAHQIEVVGEKLRTMMPWIAANKIVDKTKN</sequence>